<reference key="1">
    <citation type="journal article" date="1997" name="J. Cell Biol.">
        <title>Actinin-associated LIM protein: identification of a domain interaction between PDZ and spectrin-like repeat motifs.</title>
        <authorList>
            <person name="Xia H."/>
            <person name="Winokur S.T."/>
            <person name="Kuo W.-L."/>
            <person name="Altherr M.R."/>
            <person name="Bredt D.S."/>
        </authorList>
    </citation>
    <scope>NUCLEOTIDE SEQUENCE [MRNA] (ISOFORMS 1 AND 2)</scope>
    <scope>SUBCELLULAR LOCATION</scope>
    <scope>ALTERNATIVE SPLICING</scope>
    <scope>TISSUE SPECIFICITY</scope>
    <scope>INTERACTION WITH ACTN2</scope>
    <source>
        <tissue>Skeletal muscle</tissue>
    </source>
</reference>
<reference key="2">
    <citation type="journal article" date="2004" name="Genome Res.">
        <title>The status, quality, and expansion of the NIH full-length cDNA project: the Mammalian Gene Collection (MGC).</title>
        <authorList>
            <consortium name="The MGC Project Team"/>
        </authorList>
    </citation>
    <scope>NUCLEOTIDE SEQUENCE [LARGE SCALE MRNA] (ISOFORM 2)</scope>
    <source>
        <tissue>Heart</tissue>
    </source>
</reference>
<reference key="3">
    <citation type="journal article" date="2012" name="Nat. Commun.">
        <title>Quantitative maps of protein phosphorylation sites across 14 different rat organs and tissues.</title>
        <authorList>
            <person name="Lundby A."/>
            <person name="Secher A."/>
            <person name="Lage K."/>
            <person name="Nordsborg N.B."/>
            <person name="Dmytriyev A."/>
            <person name="Lundby C."/>
            <person name="Olsen J.V."/>
        </authorList>
    </citation>
    <scope>PHOSPHORYLATION [LARGE SCALE ANALYSIS] AT SER-18 AND SER-263</scope>
    <scope>IDENTIFICATION BY MASS SPECTROMETRY [LARGE SCALE ANALYSIS]</scope>
</reference>
<keyword id="KW-0025">Alternative splicing</keyword>
<keyword id="KW-0963">Cytoplasm</keyword>
<keyword id="KW-0440">LIM domain</keyword>
<keyword id="KW-0479">Metal-binding</keyword>
<keyword id="KW-0597">Phosphoprotein</keyword>
<keyword id="KW-1185">Reference proteome</keyword>
<keyword id="KW-0862">Zinc</keyword>
<dbReference type="EMBL" id="AF002281">
    <property type="protein sequence ID" value="AAC16671.1"/>
    <property type="molecule type" value="mRNA"/>
</dbReference>
<dbReference type="EMBL" id="BC081703">
    <property type="protein sequence ID" value="AAH81703.1"/>
    <property type="molecule type" value="mRNA"/>
</dbReference>
<dbReference type="RefSeq" id="NP_446102.1">
    <property type="nucleotide sequence ID" value="NM_053650.1"/>
</dbReference>
<dbReference type="RefSeq" id="XP_006253181.1">
    <property type="nucleotide sequence ID" value="XM_006253119.3"/>
</dbReference>
<dbReference type="SMR" id="Q66HS7"/>
<dbReference type="BioGRID" id="250287">
    <property type="interactions" value="1"/>
</dbReference>
<dbReference type="FunCoup" id="Q66HS7">
    <property type="interactions" value="141"/>
</dbReference>
<dbReference type="STRING" id="10116.ENSRNOP00000017054"/>
<dbReference type="GlyGen" id="Q66HS7">
    <property type="glycosylation" value="1 site"/>
</dbReference>
<dbReference type="iPTMnet" id="Q66HS7"/>
<dbReference type="PhosphoSitePlus" id="Q66HS7"/>
<dbReference type="PaxDb" id="10116-ENSRNOP00000017054"/>
<dbReference type="PeptideAtlas" id="Q66HS7"/>
<dbReference type="GeneID" id="114108"/>
<dbReference type="KEGG" id="rno:114108"/>
<dbReference type="AGR" id="RGD:620427"/>
<dbReference type="CTD" id="27295"/>
<dbReference type="RGD" id="620427">
    <property type="gene designation" value="Pdlim3"/>
</dbReference>
<dbReference type="eggNOG" id="KOG1703">
    <property type="taxonomic scope" value="Eukaryota"/>
</dbReference>
<dbReference type="InParanoid" id="Q66HS7"/>
<dbReference type="PRO" id="PR:Q66HS7"/>
<dbReference type="Proteomes" id="UP000002494">
    <property type="component" value="Unplaced"/>
</dbReference>
<dbReference type="GO" id="GO:0015629">
    <property type="term" value="C:actin cytoskeleton"/>
    <property type="evidence" value="ECO:0000266"/>
    <property type="project" value="RGD"/>
</dbReference>
<dbReference type="GO" id="GO:0005912">
    <property type="term" value="C:adherens junction"/>
    <property type="evidence" value="ECO:0000318"/>
    <property type="project" value="GO_Central"/>
</dbReference>
<dbReference type="GO" id="GO:0031941">
    <property type="term" value="C:filamentous actin"/>
    <property type="evidence" value="ECO:0000318"/>
    <property type="project" value="GO_Central"/>
</dbReference>
<dbReference type="GO" id="GO:0001725">
    <property type="term" value="C:stress fiber"/>
    <property type="evidence" value="ECO:0000318"/>
    <property type="project" value="GO_Central"/>
</dbReference>
<dbReference type="GO" id="GO:0030018">
    <property type="term" value="C:Z disc"/>
    <property type="evidence" value="ECO:0000314"/>
    <property type="project" value="RGD"/>
</dbReference>
<dbReference type="GO" id="GO:0003779">
    <property type="term" value="F:actin binding"/>
    <property type="evidence" value="ECO:0000318"/>
    <property type="project" value="GO_Central"/>
</dbReference>
<dbReference type="GO" id="GO:0042805">
    <property type="term" value="F:actinin binding"/>
    <property type="evidence" value="ECO:0000314"/>
    <property type="project" value="RGD"/>
</dbReference>
<dbReference type="GO" id="GO:0008092">
    <property type="term" value="F:cytoskeletal protein binding"/>
    <property type="evidence" value="ECO:0000266"/>
    <property type="project" value="RGD"/>
</dbReference>
<dbReference type="GO" id="GO:0046872">
    <property type="term" value="F:metal ion binding"/>
    <property type="evidence" value="ECO:0007669"/>
    <property type="project" value="UniProtKB-KW"/>
</dbReference>
<dbReference type="GO" id="GO:0051371">
    <property type="term" value="F:muscle alpha-actinin binding"/>
    <property type="evidence" value="ECO:0000318"/>
    <property type="project" value="GO_Central"/>
</dbReference>
<dbReference type="GO" id="GO:0008307">
    <property type="term" value="F:structural constituent of muscle"/>
    <property type="evidence" value="ECO:0000266"/>
    <property type="project" value="RGD"/>
</dbReference>
<dbReference type="GO" id="GO:0030036">
    <property type="term" value="P:actin cytoskeleton organization"/>
    <property type="evidence" value="ECO:0000318"/>
    <property type="project" value="GO_Central"/>
</dbReference>
<dbReference type="GO" id="GO:0007015">
    <property type="term" value="P:actin filament organization"/>
    <property type="evidence" value="ECO:0000266"/>
    <property type="project" value="RGD"/>
</dbReference>
<dbReference type="GO" id="GO:0007507">
    <property type="term" value="P:heart development"/>
    <property type="evidence" value="ECO:0000266"/>
    <property type="project" value="RGD"/>
</dbReference>
<dbReference type="GO" id="GO:0061061">
    <property type="term" value="P:muscle structure development"/>
    <property type="evidence" value="ECO:0000318"/>
    <property type="project" value="GO_Central"/>
</dbReference>
<dbReference type="CDD" id="cd09450">
    <property type="entry name" value="LIM_ALP"/>
    <property type="match status" value="1"/>
</dbReference>
<dbReference type="CDD" id="cd06753">
    <property type="entry name" value="PDZ_PDLIM-like"/>
    <property type="match status" value="1"/>
</dbReference>
<dbReference type="FunFam" id="2.10.110.10:FF:000026">
    <property type="entry name" value="PDZ and LIM domain protein 3"/>
    <property type="match status" value="1"/>
</dbReference>
<dbReference type="FunFam" id="2.30.42.10:FF:000055">
    <property type="entry name" value="PDZ and LIM domain protein 3"/>
    <property type="match status" value="1"/>
</dbReference>
<dbReference type="Gene3D" id="2.30.42.10">
    <property type="match status" value="1"/>
</dbReference>
<dbReference type="Gene3D" id="2.10.110.10">
    <property type="entry name" value="Cysteine Rich Protein"/>
    <property type="match status" value="1"/>
</dbReference>
<dbReference type="InterPro" id="IPR031847">
    <property type="entry name" value="PDLI1-4/Zasp-like_mid"/>
</dbReference>
<dbReference type="InterPro" id="IPR001478">
    <property type="entry name" value="PDZ"/>
</dbReference>
<dbReference type="InterPro" id="IPR050604">
    <property type="entry name" value="PDZ-LIM_domain"/>
</dbReference>
<dbReference type="InterPro" id="IPR036034">
    <property type="entry name" value="PDZ_sf"/>
</dbReference>
<dbReference type="InterPro" id="IPR006643">
    <property type="entry name" value="Zasp-like_motif"/>
</dbReference>
<dbReference type="InterPro" id="IPR001781">
    <property type="entry name" value="Znf_LIM"/>
</dbReference>
<dbReference type="PANTHER" id="PTHR24214:SF7">
    <property type="entry name" value="PDZ AND LIM DOMAIN PROTEIN 3"/>
    <property type="match status" value="1"/>
</dbReference>
<dbReference type="PANTHER" id="PTHR24214">
    <property type="entry name" value="PDZ AND LIM DOMAIN PROTEIN ZASP"/>
    <property type="match status" value="1"/>
</dbReference>
<dbReference type="Pfam" id="PF15936">
    <property type="entry name" value="DUF4749"/>
    <property type="match status" value="1"/>
</dbReference>
<dbReference type="Pfam" id="PF00412">
    <property type="entry name" value="LIM"/>
    <property type="match status" value="1"/>
</dbReference>
<dbReference type="Pfam" id="PF00595">
    <property type="entry name" value="PDZ"/>
    <property type="match status" value="1"/>
</dbReference>
<dbReference type="SMART" id="SM00132">
    <property type="entry name" value="LIM"/>
    <property type="match status" value="1"/>
</dbReference>
<dbReference type="SMART" id="SM00228">
    <property type="entry name" value="PDZ"/>
    <property type="match status" value="1"/>
</dbReference>
<dbReference type="SMART" id="SM00735">
    <property type="entry name" value="ZM"/>
    <property type="match status" value="1"/>
</dbReference>
<dbReference type="SUPFAM" id="SSF57716">
    <property type="entry name" value="Glucocorticoid receptor-like (DNA-binding domain)"/>
    <property type="match status" value="2"/>
</dbReference>
<dbReference type="SUPFAM" id="SSF50156">
    <property type="entry name" value="PDZ domain-like"/>
    <property type="match status" value="1"/>
</dbReference>
<dbReference type="PROSITE" id="PS00478">
    <property type="entry name" value="LIM_DOMAIN_1"/>
    <property type="match status" value="1"/>
</dbReference>
<dbReference type="PROSITE" id="PS50023">
    <property type="entry name" value="LIM_DOMAIN_2"/>
    <property type="match status" value="1"/>
</dbReference>
<dbReference type="PROSITE" id="PS50106">
    <property type="entry name" value="PDZ"/>
    <property type="match status" value="1"/>
</dbReference>
<comment type="function">
    <text evidence="1">May play a role in the organization of actin filament arrays within muscle cells.</text>
</comment>
<comment type="subunit">
    <text evidence="2 7">Interacts with ACTN2 (PubMed:9334352). Forms a heterodimer with PDLIM4 (via LIM domain) (By similarity).</text>
</comment>
<comment type="subcellular location">
    <subcellularLocation>
        <location evidence="7">Cytoplasm</location>
        <location evidence="7">Myofibril</location>
        <location evidence="7">Sarcomere</location>
        <location evidence="7">Z line</location>
    </subcellularLocation>
    <text>Localizes to myofiber Z-lines.</text>
</comment>
<comment type="alternative products">
    <event type="alternative splicing"/>
    <isoform>
        <id>Q66HS7-1</id>
        <name>1</name>
        <sequence type="displayed"/>
    </isoform>
    <isoform>
        <id>Q66HS7-2</id>
        <name>2</name>
        <sequence type="described" ref="VSP_016503 VSP_016504"/>
    </isoform>
</comment>
<comment type="tissue specificity">
    <text evidence="7">Highly expressed in skeletal muscle and at low levels in the heart.</text>
</comment>
<comment type="developmental stage">
    <text>At 15 dpc highly expressed in developing skeletal muscles, tongue, sternocephalic and tail. Weaker expression is seen in the heart atrium and ventricle. Expressed in a circular pattern in the intestine.</text>
</comment>
<accession>Q66HS7</accession>
<accession>O70208</accession>
<proteinExistence type="evidence at protein level"/>
<protein>
    <recommendedName>
        <fullName>PDZ and LIM domain protein 3</fullName>
    </recommendedName>
    <alternativeName>
        <fullName>Actinin-associated LIM protein</fullName>
    </alternativeName>
    <alternativeName>
        <fullName>Alpha-actinin-2-associated LIM protein</fullName>
    </alternativeName>
    <alternativeName>
        <fullName>SK-2</fullName>
    </alternativeName>
</protein>
<feature type="chain" id="PRO_0000075870" description="PDZ and LIM domain protein 3">
    <location>
        <begin position="1"/>
        <end position="362"/>
    </location>
</feature>
<feature type="domain" description="PDZ" evidence="5">
    <location>
        <begin position="1"/>
        <end position="84"/>
    </location>
</feature>
<feature type="domain" description="LIM zinc-binding" evidence="4">
    <location>
        <begin position="290"/>
        <end position="349"/>
    </location>
</feature>
<feature type="region of interest" description="Disordered" evidence="6">
    <location>
        <begin position="261"/>
        <end position="282"/>
    </location>
</feature>
<feature type="modified residue" description="Phosphoserine" evidence="11">
    <location>
        <position position="18"/>
    </location>
</feature>
<feature type="modified residue" description="Phosphoserine" evidence="3">
    <location>
        <position position="92"/>
    </location>
</feature>
<feature type="modified residue" description="Phosphoserine" evidence="11">
    <location>
        <position position="263"/>
    </location>
</feature>
<feature type="splice variant" id="VSP_016503" description="In isoform 2." evidence="8 9">
    <original>DVNYFEHKHNIRPKPFIIPGRTSGCSTPSGIDCGSGRSTPSSVSTVSTICPGDLKVAAKMAPNI</original>
    <variation>EFKPIGTAHNRRAQPFVAAANIDDKRQVVSASYNSPIGLYSTSNIRDALHGQLRGLIPSSPQN</variation>
    <location>
        <begin position="110"/>
        <end position="173"/>
    </location>
</feature>
<feature type="splice variant" id="VSP_016504" description="In isoform 2." evidence="8 9">
    <location>
        <begin position="174"/>
        <end position="220"/>
    </location>
</feature>
<feature type="sequence conflict" description="In Ref. 1; AAC16671." evidence="10" ref="1">
    <original>P</original>
    <variation>S</variation>
    <location>
        <position position="12"/>
    </location>
</feature>
<feature type="sequence conflict" description="In Ref. 1; AAC16671." evidence="10" ref="1">
    <original>V</original>
    <variation>M</variation>
    <location>
        <position position="48"/>
    </location>
</feature>
<feature type="sequence conflict" description="In Ref. 2; AAH81703." evidence="10" ref="2">
    <original>CPA</original>
    <variation>WSPQ</variation>
    <location>
        <begin position="88"/>
        <end position="90"/>
    </location>
</feature>
<feature type="sequence conflict" description="In Ref. 2; AAH81703." evidence="10" ref="2">
    <original>R</original>
    <variation>RA</variation>
    <location>
        <position position="274"/>
    </location>
</feature>
<feature type="sequence conflict" description="In Ref. 1; AAC16671." evidence="10" ref="1">
    <original>T</original>
    <variation>A</variation>
    <location>
        <position position="347"/>
    </location>
</feature>
<name>PDLI3_RAT</name>
<evidence type="ECO:0000250" key="1"/>
<evidence type="ECO:0000250" key="2">
    <source>
        <dbReference type="UniProtKB" id="O70209"/>
    </source>
</evidence>
<evidence type="ECO:0000250" key="3">
    <source>
        <dbReference type="UniProtKB" id="Q53GG5"/>
    </source>
</evidence>
<evidence type="ECO:0000255" key="4">
    <source>
        <dbReference type="PROSITE-ProRule" id="PRU00125"/>
    </source>
</evidence>
<evidence type="ECO:0000255" key="5">
    <source>
        <dbReference type="PROSITE-ProRule" id="PRU00143"/>
    </source>
</evidence>
<evidence type="ECO:0000256" key="6">
    <source>
        <dbReference type="SAM" id="MobiDB-lite"/>
    </source>
</evidence>
<evidence type="ECO:0000269" key="7">
    <source>
    </source>
</evidence>
<evidence type="ECO:0000303" key="8">
    <source>
    </source>
</evidence>
<evidence type="ECO:0000303" key="9">
    <source>
    </source>
</evidence>
<evidence type="ECO:0000305" key="10"/>
<evidence type="ECO:0007744" key="11">
    <source>
    </source>
</evidence>
<organism>
    <name type="scientific">Rattus norvegicus</name>
    <name type="common">Rat</name>
    <dbReference type="NCBI Taxonomy" id="10116"/>
    <lineage>
        <taxon>Eukaryota</taxon>
        <taxon>Metazoa</taxon>
        <taxon>Chordata</taxon>
        <taxon>Craniata</taxon>
        <taxon>Vertebrata</taxon>
        <taxon>Euteleostomi</taxon>
        <taxon>Mammalia</taxon>
        <taxon>Eutheria</taxon>
        <taxon>Euarchontoglires</taxon>
        <taxon>Glires</taxon>
        <taxon>Rodentia</taxon>
        <taxon>Myomorpha</taxon>
        <taxon>Muroidea</taxon>
        <taxon>Muridae</taxon>
        <taxon>Murinae</taxon>
        <taxon>Rattus</taxon>
    </lineage>
</organism>
<gene>
    <name type="primary">Pdlim3</name>
    <name evidence="9" type="synonym">Alp</name>
</gene>
<sequence>MPQNVVLPGPAPWGFRLSGGIDFNQPLVITRITPGSKAEAANLCPGDVILAIDGFGTESMTHADAQDRIKAASYQLCLKIDRAETRLCPAVSEDGKAHPFKINLEAEPQDVNYFEHKHNIRPKPFIIPGRTSGCSTPSGIDCGSGRSTPSSVSTVSTICPGDLKVAAKMAPNIPLEMELPGVKIVHAQFNTPMQLYSDDNIMETLQGQVSTALGETPSMSEPTASVPPQSDVYRMLHDNRDEPAAPRQSGSFRVLQELVNDGSDDRPAGTRSVRPVTKVHGGAGGAQRMPLCDKCGSGIVGAVVKARDKYRHPECFVCADCNLNLKQKGYFFVEGELYCEMHARARTRPPEGYDTVTLYPKA</sequence>